<feature type="chain" id="PRO_0000300548" description="Formate--tetrahydrofolate ligase">
    <location>
        <begin position="1"/>
        <end position="556"/>
    </location>
</feature>
<feature type="binding site" evidence="1">
    <location>
        <begin position="65"/>
        <end position="72"/>
    </location>
    <ligand>
        <name>ATP</name>
        <dbReference type="ChEBI" id="CHEBI:30616"/>
    </ligand>
</feature>
<evidence type="ECO:0000255" key="1">
    <source>
        <dbReference type="HAMAP-Rule" id="MF_01543"/>
    </source>
</evidence>
<accession>A4VU67</accession>
<gene>
    <name evidence="1" type="primary">fhs</name>
    <name type="ordered locus">SSU05_0690</name>
</gene>
<dbReference type="EC" id="6.3.4.3" evidence="1"/>
<dbReference type="EMBL" id="CP000407">
    <property type="protein sequence ID" value="ABP89656.1"/>
    <property type="molecule type" value="Genomic_DNA"/>
</dbReference>
<dbReference type="SMR" id="A4VU67"/>
<dbReference type="STRING" id="391295.SSU05_0690"/>
<dbReference type="KEGG" id="ssu:SSU05_0690"/>
<dbReference type="eggNOG" id="COG2759">
    <property type="taxonomic scope" value="Bacteria"/>
</dbReference>
<dbReference type="HOGENOM" id="CLU_003601_3_3_9"/>
<dbReference type="UniPathway" id="UPA00193"/>
<dbReference type="GO" id="GO:0005524">
    <property type="term" value="F:ATP binding"/>
    <property type="evidence" value="ECO:0007669"/>
    <property type="project" value="UniProtKB-UniRule"/>
</dbReference>
<dbReference type="GO" id="GO:0004329">
    <property type="term" value="F:formate-tetrahydrofolate ligase activity"/>
    <property type="evidence" value="ECO:0007669"/>
    <property type="project" value="UniProtKB-UniRule"/>
</dbReference>
<dbReference type="GO" id="GO:0035999">
    <property type="term" value="P:tetrahydrofolate interconversion"/>
    <property type="evidence" value="ECO:0007669"/>
    <property type="project" value="UniProtKB-UniRule"/>
</dbReference>
<dbReference type="CDD" id="cd00477">
    <property type="entry name" value="FTHFS"/>
    <property type="match status" value="1"/>
</dbReference>
<dbReference type="FunFam" id="3.30.1510.10:FF:000001">
    <property type="entry name" value="Formate--tetrahydrofolate ligase"/>
    <property type="match status" value="1"/>
</dbReference>
<dbReference type="FunFam" id="3.10.410.10:FF:000001">
    <property type="entry name" value="Putative formate--tetrahydrofolate ligase"/>
    <property type="match status" value="1"/>
</dbReference>
<dbReference type="Gene3D" id="3.30.1510.10">
    <property type="entry name" value="Domain 2, N(10)-formyltetrahydrofolate synthetase"/>
    <property type="match status" value="1"/>
</dbReference>
<dbReference type="Gene3D" id="3.10.410.10">
    <property type="entry name" value="Formyltetrahydrofolate synthetase, domain 3"/>
    <property type="match status" value="1"/>
</dbReference>
<dbReference type="Gene3D" id="3.40.50.300">
    <property type="entry name" value="P-loop containing nucleotide triphosphate hydrolases"/>
    <property type="match status" value="1"/>
</dbReference>
<dbReference type="HAMAP" id="MF_01543">
    <property type="entry name" value="FTHFS"/>
    <property type="match status" value="1"/>
</dbReference>
<dbReference type="InterPro" id="IPR000559">
    <property type="entry name" value="Formate_THF_ligase"/>
</dbReference>
<dbReference type="InterPro" id="IPR020628">
    <property type="entry name" value="Formate_THF_ligase_CS"/>
</dbReference>
<dbReference type="InterPro" id="IPR027417">
    <property type="entry name" value="P-loop_NTPase"/>
</dbReference>
<dbReference type="NCBIfam" id="NF010030">
    <property type="entry name" value="PRK13505.1"/>
    <property type="match status" value="1"/>
</dbReference>
<dbReference type="Pfam" id="PF01268">
    <property type="entry name" value="FTHFS"/>
    <property type="match status" value="1"/>
</dbReference>
<dbReference type="SUPFAM" id="SSF52540">
    <property type="entry name" value="P-loop containing nucleoside triphosphate hydrolases"/>
    <property type="match status" value="1"/>
</dbReference>
<dbReference type="PROSITE" id="PS00721">
    <property type="entry name" value="FTHFS_1"/>
    <property type="match status" value="1"/>
</dbReference>
<dbReference type="PROSITE" id="PS00722">
    <property type="entry name" value="FTHFS_2"/>
    <property type="match status" value="1"/>
</dbReference>
<sequence length="556" mass="59108">MKTDIDIAQSITLKPITEIVEKVGISFDDIELYGKYKAKLSFDKINAVKDNAPGKLILVTAINPTPAGEGKSTITIGLADALSKIGKKTMIALREPSLGPVMGIKGGAAGGGYAQVLPMEDINLHFTGDMHAITTANNALSALIDNHIHQGNVIGIDQRRIIWKRVVDLNDRALRKVTVGLGGPLNGIPREDGFDITVASEIMAILCLATDINDLKERLANIVIGYRFDCSPVYVRDLAVEGALTLILKDAIKPNLVQTIYGTPAFVHGGPFANIAHGCNSVLATTTALRLADYTVTEAGFGADLGAEKFLDIKVPNLPKAPDAVVIVATLRALKMHGGVAKTELSAENVEAVKAGFSNLKRHVENIRKYGIPAVVAINEFVSDTAAEIAVLKELCAAIGVPVELASVWANGADGGVELAETVVATIDNQAASYQRLYKSEDSLEEKVTKIVTQIYGGTGVVFEKKARNQLTEFAKNGWDKLPVCMAKTQYSFSDDQFALGAPTDFDITVREFVPKLGAGFIVALTGDVMTMPGLPKAPVALNMDVAADGTAIGLF</sequence>
<comment type="catalytic activity">
    <reaction evidence="1">
        <text>(6S)-5,6,7,8-tetrahydrofolate + formate + ATP = (6R)-10-formyltetrahydrofolate + ADP + phosphate</text>
        <dbReference type="Rhea" id="RHEA:20221"/>
        <dbReference type="ChEBI" id="CHEBI:15740"/>
        <dbReference type="ChEBI" id="CHEBI:30616"/>
        <dbReference type="ChEBI" id="CHEBI:43474"/>
        <dbReference type="ChEBI" id="CHEBI:57453"/>
        <dbReference type="ChEBI" id="CHEBI:195366"/>
        <dbReference type="ChEBI" id="CHEBI:456216"/>
        <dbReference type="EC" id="6.3.4.3"/>
    </reaction>
</comment>
<comment type="pathway">
    <text evidence="1">One-carbon metabolism; tetrahydrofolate interconversion.</text>
</comment>
<comment type="similarity">
    <text evidence="1">Belongs to the formate--tetrahydrofolate ligase family.</text>
</comment>
<name>FTHS_STRSY</name>
<proteinExistence type="inferred from homology"/>
<protein>
    <recommendedName>
        <fullName evidence="1">Formate--tetrahydrofolate ligase</fullName>
        <ecNumber evidence="1">6.3.4.3</ecNumber>
    </recommendedName>
    <alternativeName>
        <fullName evidence="1">Formyltetrahydrofolate synthetase</fullName>
        <shortName evidence="1">FHS</shortName>
        <shortName evidence="1">FTHFS</shortName>
    </alternativeName>
</protein>
<reference key="1">
    <citation type="journal article" date="2007" name="PLoS ONE">
        <title>A glimpse of streptococcal toxic shock syndrome from comparative genomics of S. suis 2 Chinese isolates.</title>
        <authorList>
            <person name="Chen C."/>
            <person name="Tang J."/>
            <person name="Dong W."/>
            <person name="Wang C."/>
            <person name="Feng Y."/>
            <person name="Wang J."/>
            <person name="Zheng F."/>
            <person name="Pan X."/>
            <person name="Liu D."/>
            <person name="Li M."/>
            <person name="Song Y."/>
            <person name="Zhu X."/>
            <person name="Sun H."/>
            <person name="Feng T."/>
            <person name="Guo Z."/>
            <person name="Ju A."/>
            <person name="Ge J."/>
            <person name="Dong Y."/>
            <person name="Sun W."/>
            <person name="Jiang Y."/>
            <person name="Wang J."/>
            <person name="Yan J."/>
            <person name="Yang H."/>
            <person name="Wang X."/>
            <person name="Gao G.F."/>
            <person name="Yang R."/>
            <person name="Wang J."/>
            <person name="Yu J."/>
        </authorList>
    </citation>
    <scope>NUCLEOTIDE SEQUENCE [LARGE SCALE GENOMIC DNA]</scope>
    <source>
        <strain>05ZYH33</strain>
    </source>
</reference>
<organism>
    <name type="scientific">Streptococcus suis (strain 05ZYH33)</name>
    <dbReference type="NCBI Taxonomy" id="391295"/>
    <lineage>
        <taxon>Bacteria</taxon>
        <taxon>Bacillati</taxon>
        <taxon>Bacillota</taxon>
        <taxon>Bacilli</taxon>
        <taxon>Lactobacillales</taxon>
        <taxon>Streptococcaceae</taxon>
        <taxon>Streptococcus</taxon>
    </lineage>
</organism>
<keyword id="KW-0067">ATP-binding</keyword>
<keyword id="KW-0436">Ligase</keyword>
<keyword id="KW-0547">Nucleotide-binding</keyword>
<keyword id="KW-0554">One-carbon metabolism</keyword>